<evidence type="ECO:0000255" key="1">
    <source>
        <dbReference type="HAMAP-Rule" id="MF_00116"/>
    </source>
</evidence>
<sequence>MKIKIQKIHPNALIPKYQTEGSSGFDLHAIEEVMIKPHSVGLVKIGICLSLEVGYELQVRTRSGLALNHQVVVLNSPGTVDNDYRGEIKVILANLSDKDFKVQVGDRIAQGVVQKTYKAEFIECEQLDETSRGSGGFGSTGVSKA</sequence>
<gene>
    <name evidence="1" type="primary">dut</name>
    <name type="ordered locus">HPSH_02485</name>
</gene>
<dbReference type="EC" id="3.6.1.23" evidence="1"/>
<dbReference type="EMBL" id="CP001072">
    <property type="protein sequence ID" value="ACD47947.1"/>
    <property type="molecule type" value="Genomic_DNA"/>
</dbReference>
<dbReference type="RefSeq" id="WP_000694147.1">
    <property type="nucleotide sequence ID" value="NC_010698.2"/>
</dbReference>
<dbReference type="SMR" id="B2USW5"/>
<dbReference type="KEGG" id="hps:HPSH_02485"/>
<dbReference type="HOGENOM" id="CLU_068508_1_2_7"/>
<dbReference type="UniPathway" id="UPA00610">
    <property type="reaction ID" value="UER00666"/>
</dbReference>
<dbReference type="GO" id="GO:0004170">
    <property type="term" value="F:dUTP diphosphatase activity"/>
    <property type="evidence" value="ECO:0007669"/>
    <property type="project" value="UniProtKB-UniRule"/>
</dbReference>
<dbReference type="GO" id="GO:0000287">
    <property type="term" value="F:magnesium ion binding"/>
    <property type="evidence" value="ECO:0007669"/>
    <property type="project" value="UniProtKB-UniRule"/>
</dbReference>
<dbReference type="GO" id="GO:0006226">
    <property type="term" value="P:dUMP biosynthetic process"/>
    <property type="evidence" value="ECO:0007669"/>
    <property type="project" value="UniProtKB-UniRule"/>
</dbReference>
<dbReference type="GO" id="GO:0046081">
    <property type="term" value="P:dUTP catabolic process"/>
    <property type="evidence" value="ECO:0007669"/>
    <property type="project" value="InterPro"/>
</dbReference>
<dbReference type="CDD" id="cd07557">
    <property type="entry name" value="trimeric_dUTPase"/>
    <property type="match status" value="1"/>
</dbReference>
<dbReference type="FunFam" id="2.70.40.10:FF:000013">
    <property type="entry name" value="Deoxyuridine 5'-triphosphate nucleotidohydrolase"/>
    <property type="match status" value="1"/>
</dbReference>
<dbReference type="Gene3D" id="2.70.40.10">
    <property type="match status" value="1"/>
</dbReference>
<dbReference type="HAMAP" id="MF_00116">
    <property type="entry name" value="dUTPase_bact"/>
    <property type="match status" value="1"/>
</dbReference>
<dbReference type="InterPro" id="IPR008181">
    <property type="entry name" value="dUTPase"/>
</dbReference>
<dbReference type="InterPro" id="IPR029054">
    <property type="entry name" value="dUTPase-like"/>
</dbReference>
<dbReference type="InterPro" id="IPR036157">
    <property type="entry name" value="dUTPase-like_sf"/>
</dbReference>
<dbReference type="InterPro" id="IPR033704">
    <property type="entry name" value="dUTPase_trimeric"/>
</dbReference>
<dbReference type="NCBIfam" id="TIGR00576">
    <property type="entry name" value="dut"/>
    <property type="match status" value="1"/>
</dbReference>
<dbReference type="NCBIfam" id="NF001862">
    <property type="entry name" value="PRK00601.1"/>
    <property type="match status" value="1"/>
</dbReference>
<dbReference type="PANTHER" id="PTHR11241">
    <property type="entry name" value="DEOXYURIDINE 5'-TRIPHOSPHATE NUCLEOTIDOHYDROLASE"/>
    <property type="match status" value="1"/>
</dbReference>
<dbReference type="PANTHER" id="PTHR11241:SF0">
    <property type="entry name" value="DEOXYURIDINE 5'-TRIPHOSPHATE NUCLEOTIDOHYDROLASE"/>
    <property type="match status" value="1"/>
</dbReference>
<dbReference type="Pfam" id="PF00692">
    <property type="entry name" value="dUTPase"/>
    <property type="match status" value="1"/>
</dbReference>
<dbReference type="SUPFAM" id="SSF51283">
    <property type="entry name" value="dUTPase-like"/>
    <property type="match status" value="1"/>
</dbReference>
<proteinExistence type="inferred from homology"/>
<feature type="chain" id="PRO_1000094968" description="Deoxyuridine 5'-triphosphate nucleotidohydrolase">
    <location>
        <begin position="1"/>
        <end position="145"/>
    </location>
</feature>
<feature type="binding site" evidence="1">
    <location>
        <begin position="62"/>
        <end position="64"/>
    </location>
    <ligand>
        <name>substrate</name>
    </ligand>
</feature>
<feature type="binding site" evidence="1">
    <location>
        <position position="75"/>
    </location>
    <ligand>
        <name>substrate</name>
    </ligand>
</feature>
<feature type="binding site" evidence="1">
    <location>
        <begin position="79"/>
        <end position="81"/>
    </location>
    <ligand>
        <name>substrate</name>
    </ligand>
</feature>
<feature type="binding site" evidence="1">
    <location>
        <position position="89"/>
    </location>
    <ligand>
        <name>substrate</name>
    </ligand>
</feature>
<keyword id="KW-0378">Hydrolase</keyword>
<keyword id="KW-0460">Magnesium</keyword>
<keyword id="KW-0479">Metal-binding</keyword>
<keyword id="KW-0546">Nucleotide metabolism</keyword>
<comment type="function">
    <text evidence="1">This enzyme is involved in nucleotide metabolism: it produces dUMP, the immediate precursor of thymidine nucleotides and it decreases the intracellular concentration of dUTP so that uracil cannot be incorporated into DNA.</text>
</comment>
<comment type="catalytic activity">
    <reaction evidence="1">
        <text>dUTP + H2O = dUMP + diphosphate + H(+)</text>
        <dbReference type="Rhea" id="RHEA:10248"/>
        <dbReference type="ChEBI" id="CHEBI:15377"/>
        <dbReference type="ChEBI" id="CHEBI:15378"/>
        <dbReference type="ChEBI" id="CHEBI:33019"/>
        <dbReference type="ChEBI" id="CHEBI:61555"/>
        <dbReference type="ChEBI" id="CHEBI:246422"/>
        <dbReference type="EC" id="3.6.1.23"/>
    </reaction>
</comment>
<comment type="cofactor">
    <cofactor evidence="1">
        <name>Mg(2+)</name>
        <dbReference type="ChEBI" id="CHEBI:18420"/>
    </cofactor>
</comment>
<comment type="pathway">
    <text evidence="1">Pyrimidine metabolism; dUMP biosynthesis; dUMP from dCTP (dUTP route): step 2/2.</text>
</comment>
<comment type="similarity">
    <text evidence="1">Belongs to the dUTPase family.</text>
</comment>
<organism>
    <name type="scientific">Helicobacter pylori (strain Shi470)</name>
    <dbReference type="NCBI Taxonomy" id="512562"/>
    <lineage>
        <taxon>Bacteria</taxon>
        <taxon>Pseudomonadati</taxon>
        <taxon>Campylobacterota</taxon>
        <taxon>Epsilonproteobacteria</taxon>
        <taxon>Campylobacterales</taxon>
        <taxon>Helicobacteraceae</taxon>
        <taxon>Helicobacter</taxon>
    </lineage>
</organism>
<reference key="1">
    <citation type="submission" date="2008-05" db="EMBL/GenBank/DDBJ databases">
        <title>Genome sequence of Helicobacter pylori from the remote Amazon: traces of Asian ancestry of the first Americans.</title>
        <authorList>
            <person name="Kersulyte D."/>
            <person name="Kalia A."/>
            <person name="Gilman R.H."/>
            <person name="Berg D.E."/>
        </authorList>
    </citation>
    <scope>NUCLEOTIDE SEQUENCE [LARGE SCALE GENOMIC DNA]</scope>
    <source>
        <strain>Shi470</strain>
    </source>
</reference>
<name>DUT_HELPS</name>
<protein>
    <recommendedName>
        <fullName evidence="1">Deoxyuridine 5'-triphosphate nucleotidohydrolase</fullName>
        <shortName evidence="1">dUTPase</shortName>
        <ecNumber evidence="1">3.6.1.23</ecNumber>
    </recommendedName>
    <alternativeName>
        <fullName evidence="1">dUTP pyrophosphatase</fullName>
    </alternativeName>
</protein>
<accession>B2USW5</accession>